<protein>
    <recommendedName>
        <fullName>rRNA-processing protein efg1</fullName>
    </recommendedName>
</protein>
<proteinExistence type="inferred from homology"/>
<organism>
    <name type="scientific">Aspergillus oryzae (strain ATCC 42149 / RIB 40)</name>
    <name type="common">Yellow koji mold</name>
    <dbReference type="NCBI Taxonomy" id="510516"/>
    <lineage>
        <taxon>Eukaryota</taxon>
        <taxon>Fungi</taxon>
        <taxon>Dikarya</taxon>
        <taxon>Ascomycota</taxon>
        <taxon>Pezizomycotina</taxon>
        <taxon>Eurotiomycetes</taxon>
        <taxon>Eurotiomycetidae</taxon>
        <taxon>Eurotiales</taxon>
        <taxon>Aspergillaceae</taxon>
        <taxon>Aspergillus</taxon>
        <taxon>Aspergillus subgen. Circumdati</taxon>
    </lineage>
</organism>
<name>EFG1P_ASPOR</name>
<reference key="1">
    <citation type="journal article" date="2005" name="Nature">
        <title>Genome sequencing and analysis of Aspergillus oryzae.</title>
        <authorList>
            <person name="Machida M."/>
            <person name="Asai K."/>
            <person name="Sano M."/>
            <person name="Tanaka T."/>
            <person name="Kumagai T."/>
            <person name="Terai G."/>
            <person name="Kusumoto K."/>
            <person name="Arima T."/>
            <person name="Akita O."/>
            <person name="Kashiwagi Y."/>
            <person name="Abe K."/>
            <person name="Gomi K."/>
            <person name="Horiuchi H."/>
            <person name="Kitamoto K."/>
            <person name="Kobayashi T."/>
            <person name="Takeuchi M."/>
            <person name="Denning D.W."/>
            <person name="Galagan J.E."/>
            <person name="Nierman W.C."/>
            <person name="Yu J."/>
            <person name="Archer D.B."/>
            <person name="Bennett J.W."/>
            <person name="Bhatnagar D."/>
            <person name="Cleveland T.E."/>
            <person name="Fedorova N.D."/>
            <person name="Gotoh O."/>
            <person name="Horikawa H."/>
            <person name="Hosoyama A."/>
            <person name="Ichinomiya M."/>
            <person name="Igarashi R."/>
            <person name="Iwashita K."/>
            <person name="Juvvadi P.R."/>
            <person name="Kato M."/>
            <person name="Kato Y."/>
            <person name="Kin T."/>
            <person name="Kokubun A."/>
            <person name="Maeda H."/>
            <person name="Maeyama N."/>
            <person name="Maruyama J."/>
            <person name="Nagasaki H."/>
            <person name="Nakajima T."/>
            <person name="Oda K."/>
            <person name="Okada K."/>
            <person name="Paulsen I."/>
            <person name="Sakamoto K."/>
            <person name="Sawano T."/>
            <person name="Takahashi M."/>
            <person name="Takase K."/>
            <person name="Terabayashi Y."/>
            <person name="Wortman J.R."/>
            <person name="Yamada O."/>
            <person name="Yamagata Y."/>
            <person name="Anazawa H."/>
            <person name="Hata Y."/>
            <person name="Koide Y."/>
            <person name="Komori T."/>
            <person name="Koyama Y."/>
            <person name="Minetoki T."/>
            <person name="Suharnan S."/>
            <person name="Tanaka A."/>
            <person name="Isono K."/>
            <person name="Kuhara S."/>
            <person name="Ogasawara N."/>
            <person name="Kikuchi H."/>
        </authorList>
    </citation>
    <scope>NUCLEOTIDE SEQUENCE [LARGE SCALE GENOMIC DNA]</scope>
    <source>
        <strain>ATCC 42149 / RIB 40</strain>
    </source>
</reference>
<gene>
    <name type="primary">efg1</name>
    <name type="ORF">AO090026000636</name>
</gene>
<dbReference type="EMBL" id="BA000051">
    <property type="protein sequence ID" value="BAE60058.1"/>
    <property type="molecule type" value="Genomic_DNA"/>
</dbReference>
<dbReference type="RefSeq" id="XP_001822060.1">
    <property type="nucleotide sequence ID" value="XM_001822008.1"/>
</dbReference>
<dbReference type="SMR" id="Q2UEF7"/>
<dbReference type="STRING" id="510516.Q2UEF7"/>
<dbReference type="EnsemblFungi" id="BAE60058">
    <property type="protein sequence ID" value="BAE60058"/>
    <property type="gene ID" value="AO090026000636"/>
</dbReference>
<dbReference type="GeneID" id="5994088"/>
<dbReference type="KEGG" id="aor:AO090026000636"/>
<dbReference type="VEuPathDB" id="FungiDB:AO090026000636"/>
<dbReference type="HOGENOM" id="CLU_066912_0_0_1"/>
<dbReference type="OMA" id="KCMEEGT"/>
<dbReference type="OrthoDB" id="116619at5052"/>
<dbReference type="Proteomes" id="UP000006564">
    <property type="component" value="Chromosome 3"/>
</dbReference>
<dbReference type="GO" id="GO:0005730">
    <property type="term" value="C:nucleolus"/>
    <property type="evidence" value="ECO:0007669"/>
    <property type="project" value="UniProtKB-SubCell"/>
</dbReference>
<dbReference type="GO" id="GO:0030688">
    <property type="term" value="C:preribosome, small subunit precursor"/>
    <property type="evidence" value="ECO:0007669"/>
    <property type="project" value="TreeGrafter"/>
</dbReference>
<dbReference type="GO" id="GO:0000462">
    <property type="term" value="P:maturation of SSU-rRNA from tricistronic rRNA transcript (SSU-rRNA, 5.8S rRNA, LSU-rRNA)"/>
    <property type="evidence" value="ECO:0007669"/>
    <property type="project" value="TreeGrafter"/>
</dbReference>
<dbReference type="InterPro" id="IPR019310">
    <property type="entry name" value="Efg1"/>
</dbReference>
<dbReference type="InterPro" id="IPR050786">
    <property type="entry name" value="EFG1_rRNA-proc"/>
</dbReference>
<dbReference type="PANTHER" id="PTHR33911">
    <property type="entry name" value="RRNA-PROCESSING PROTEIN EFG1"/>
    <property type="match status" value="1"/>
</dbReference>
<dbReference type="PANTHER" id="PTHR33911:SF1">
    <property type="entry name" value="RRNA-PROCESSING PROTEIN EFG1"/>
    <property type="match status" value="1"/>
</dbReference>
<dbReference type="Pfam" id="PF10153">
    <property type="entry name" value="Efg1"/>
    <property type="match status" value="1"/>
</dbReference>
<sequence length="320" mass="36831">MPREDSRSQSPVSRPSGDRHYRDRSDPPKRKHNSDGASHQPYRKKVQLPKKEHQYPSVNELKKRIRDVKRLLNRVDLPADARIVQERALAGYENDLEEEEKRRERSKMIKKYHFVRFLDRKTASKDVKRLERREKEVSGSDLDSAAKEQKLAALAQKLRVARVNLNYTIYYPLAERYIALYADAKKKKEMVKDGNNDEDGDAGYTLVHANAADKPAMWHTVEKCMKDGTLELLRDGKLKNGESGAVTKEKSNVDKKKTSIRDSVQQKDTTKTSVKPQRREDKNAKDSRGFSSKNDSRHSRARQSSPDDNGDESDGGFFEM</sequence>
<comment type="function">
    <text evidence="1">Involved in rRNA processing.</text>
</comment>
<comment type="subcellular location">
    <subcellularLocation>
        <location evidence="1">Nucleus</location>
        <location evidence="1">Nucleolus</location>
    </subcellularLocation>
</comment>
<comment type="similarity">
    <text evidence="4">Belongs to the EFG1 family.</text>
</comment>
<keyword id="KW-0175">Coiled coil</keyword>
<keyword id="KW-0539">Nucleus</keyword>
<keyword id="KW-1185">Reference proteome</keyword>
<keyword id="KW-0698">rRNA processing</keyword>
<evidence type="ECO:0000250" key="1"/>
<evidence type="ECO:0000255" key="2"/>
<evidence type="ECO:0000256" key="3">
    <source>
        <dbReference type="SAM" id="MobiDB-lite"/>
    </source>
</evidence>
<evidence type="ECO:0000305" key="4"/>
<feature type="chain" id="PRO_0000330262" description="rRNA-processing protein efg1">
    <location>
        <begin position="1"/>
        <end position="320"/>
    </location>
</feature>
<feature type="region of interest" description="Disordered" evidence="3">
    <location>
        <begin position="1"/>
        <end position="59"/>
    </location>
</feature>
<feature type="region of interest" description="Disordered" evidence="3">
    <location>
        <begin position="241"/>
        <end position="320"/>
    </location>
</feature>
<feature type="coiled-coil region" evidence="2">
    <location>
        <begin position="57"/>
        <end position="111"/>
    </location>
</feature>
<feature type="coiled-coil region" evidence="2">
    <location>
        <begin position="145"/>
        <end position="166"/>
    </location>
</feature>
<feature type="compositionally biased region" description="Basic and acidic residues" evidence="3">
    <location>
        <begin position="16"/>
        <end position="28"/>
    </location>
</feature>
<feature type="compositionally biased region" description="Basic and acidic residues" evidence="3">
    <location>
        <begin position="247"/>
        <end position="270"/>
    </location>
</feature>
<feature type="compositionally biased region" description="Basic and acidic residues" evidence="3">
    <location>
        <begin position="277"/>
        <end position="298"/>
    </location>
</feature>
<accession>Q2UEF7</accession>